<proteinExistence type="inferred from homology"/>
<accession>Q8FS31</accession>
<keyword id="KW-0413">Isomerase</keyword>
<keyword id="KW-1185">Reference proteome</keyword>
<keyword id="KW-0819">tRNA processing</keyword>
<comment type="function">
    <text evidence="1">Formation of pseudouridine at positions 38, 39 and 40 in the anticodon stem and loop of transfer RNAs.</text>
</comment>
<comment type="catalytic activity">
    <reaction evidence="1">
        <text>uridine(38/39/40) in tRNA = pseudouridine(38/39/40) in tRNA</text>
        <dbReference type="Rhea" id="RHEA:22376"/>
        <dbReference type="Rhea" id="RHEA-COMP:10085"/>
        <dbReference type="Rhea" id="RHEA-COMP:10087"/>
        <dbReference type="ChEBI" id="CHEBI:65314"/>
        <dbReference type="ChEBI" id="CHEBI:65315"/>
        <dbReference type="EC" id="5.4.99.12"/>
    </reaction>
</comment>
<comment type="subunit">
    <text evidence="1">Homodimer.</text>
</comment>
<comment type="similarity">
    <text evidence="1">Belongs to the tRNA pseudouridine synthase TruA family.</text>
</comment>
<comment type="sequence caution" evidence="2">
    <conflict type="erroneous initiation">
        <sequence resource="EMBL-CDS" id="BAC17384"/>
    </conflict>
</comment>
<dbReference type="EC" id="5.4.99.12" evidence="1"/>
<dbReference type="EMBL" id="BA000035">
    <property type="protein sequence ID" value="BAC17384.1"/>
    <property type="status" value="ALT_INIT"/>
    <property type="molecule type" value="Genomic_DNA"/>
</dbReference>
<dbReference type="SMR" id="Q8FS31"/>
<dbReference type="STRING" id="196164.gene:10740976"/>
<dbReference type="KEGG" id="cef:CE0574"/>
<dbReference type="eggNOG" id="COG0101">
    <property type="taxonomic scope" value="Bacteria"/>
</dbReference>
<dbReference type="HOGENOM" id="CLU_014673_0_2_11"/>
<dbReference type="Proteomes" id="UP000001409">
    <property type="component" value="Chromosome"/>
</dbReference>
<dbReference type="GO" id="GO:0003723">
    <property type="term" value="F:RNA binding"/>
    <property type="evidence" value="ECO:0007669"/>
    <property type="project" value="InterPro"/>
</dbReference>
<dbReference type="GO" id="GO:0160147">
    <property type="term" value="F:tRNA pseudouridine(38-40) synthase activity"/>
    <property type="evidence" value="ECO:0007669"/>
    <property type="project" value="UniProtKB-EC"/>
</dbReference>
<dbReference type="GO" id="GO:0031119">
    <property type="term" value="P:tRNA pseudouridine synthesis"/>
    <property type="evidence" value="ECO:0007669"/>
    <property type="project" value="UniProtKB-UniRule"/>
</dbReference>
<dbReference type="CDD" id="cd02570">
    <property type="entry name" value="PseudoU_synth_EcTruA"/>
    <property type="match status" value="1"/>
</dbReference>
<dbReference type="FunFam" id="3.30.70.580:FF:000001">
    <property type="entry name" value="tRNA pseudouridine synthase A"/>
    <property type="match status" value="1"/>
</dbReference>
<dbReference type="Gene3D" id="3.30.70.660">
    <property type="entry name" value="Pseudouridine synthase I, catalytic domain, C-terminal subdomain"/>
    <property type="match status" value="1"/>
</dbReference>
<dbReference type="Gene3D" id="3.30.70.580">
    <property type="entry name" value="Pseudouridine synthase I, catalytic domain, N-terminal subdomain"/>
    <property type="match status" value="1"/>
</dbReference>
<dbReference type="HAMAP" id="MF_00171">
    <property type="entry name" value="TruA"/>
    <property type="match status" value="1"/>
</dbReference>
<dbReference type="InterPro" id="IPR020103">
    <property type="entry name" value="PsdUridine_synth_cat_dom_sf"/>
</dbReference>
<dbReference type="InterPro" id="IPR001406">
    <property type="entry name" value="PsdUridine_synth_TruA"/>
</dbReference>
<dbReference type="InterPro" id="IPR020097">
    <property type="entry name" value="PsdUridine_synth_TruA_a/b_dom"/>
</dbReference>
<dbReference type="InterPro" id="IPR020095">
    <property type="entry name" value="PsdUridine_synth_TruA_C"/>
</dbReference>
<dbReference type="InterPro" id="IPR020094">
    <property type="entry name" value="TruA/RsuA/RluB/E/F_N"/>
</dbReference>
<dbReference type="NCBIfam" id="TIGR00071">
    <property type="entry name" value="hisT_truA"/>
    <property type="match status" value="1"/>
</dbReference>
<dbReference type="PANTHER" id="PTHR11142">
    <property type="entry name" value="PSEUDOURIDYLATE SYNTHASE"/>
    <property type="match status" value="1"/>
</dbReference>
<dbReference type="PANTHER" id="PTHR11142:SF0">
    <property type="entry name" value="TRNA PSEUDOURIDINE SYNTHASE-LIKE 1"/>
    <property type="match status" value="1"/>
</dbReference>
<dbReference type="Pfam" id="PF01416">
    <property type="entry name" value="PseudoU_synth_1"/>
    <property type="match status" value="2"/>
</dbReference>
<dbReference type="PIRSF" id="PIRSF001430">
    <property type="entry name" value="tRNA_psdUrid_synth"/>
    <property type="match status" value="1"/>
</dbReference>
<dbReference type="SUPFAM" id="SSF55120">
    <property type="entry name" value="Pseudouridine synthase"/>
    <property type="match status" value="1"/>
</dbReference>
<protein>
    <recommendedName>
        <fullName evidence="1">tRNA pseudouridine synthase A</fullName>
        <ecNumber evidence="1">5.4.99.12</ecNumber>
    </recommendedName>
    <alternativeName>
        <fullName evidence="1">tRNA pseudouridine(38-40) synthase</fullName>
    </alternativeName>
    <alternativeName>
        <fullName evidence="1">tRNA pseudouridylate synthase I</fullName>
    </alternativeName>
    <alternativeName>
        <fullName evidence="1">tRNA-uridine isomerase I</fullName>
    </alternativeName>
</protein>
<sequence>MRIRLDLDYDGTDFHGWARQGDSDLRTVQKVLEDNLGMVLRAPVELTVAGRTDAGVHAAGQVAHFDIPRESLQQRSIDGDPTKLVRRLSRLLPEDIRVHGVNYAPEGFDARFSALRRHYVYRITTHPAGPLPTRVRDTAAWPKPVDIQAMQTAADVLIGLHDFVAFCKAKPNASTVRELQEFTWHDVSTPTEPQLYEAHVVADAFCWSMVRSLVGSCMAVGEGRRAGDFTAQLLTATERSPDVPVAPAKGLSLVGVDYPDDDQLRARAEETRAVRGALPGAP</sequence>
<organism>
    <name type="scientific">Corynebacterium efficiens (strain DSM 44549 / YS-314 / AJ 12310 / JCM 11189 / NBRC 100395)</name>
    <dbReference type="NCBI Taxonomy" id="196164"/>
    <lineage>
        <taxon>Bacteria</taxon>
        <taxon>Bacillati</taxon>
        <taxon>Actinomycetota</taxon>
        <taxon>Actinomycetes</taxon>
        <taxon>Mycobacteriales</taxon>
        <taxon>Corynebacteriaceae</taxon>
        <taxon>Corynebacterium</taxon>
    </lineage>
</organism>
<name>TRUA_COREF</name>
<evidence type="ECO:0000255" key="1">
    <source>
        <dbReference type="HAMAP-Rule" id="MF_00171"/>
    </source>
</evidence>
<evidence type="ECO:0000305" key="2"/>
<feature type="chain" id="PRO_0000057369" description="tRNA pseudouridine synthase A">
    <location>
        <begin position="1"/>
        <end position="282"/>
    </location>
</feature>
<feature type="active site" description="Nucleophile" evidence="1">
    <location>
        <position position="53"/>
    </location>
</feature>
<feature type="binding site" evidence="1">
    <location>
        <position position="119"/>
    </location>
    <ligand>
        <name>substrate</name>
    </ligand>
</feature>
<reference key="1">
    <citation type="journal article" date="2003" name="Genome Res.">
        <title>Comparative complete genome sequence analysis of the amino acid replacements responsible for the thermostability of Corynebacterium efficiens.</title>
        <authorList>
            <person name="Nishio Y."/>
            <person name="Nakamura Y."/>
            <person name="Kawarabayasi Y."/>
            <person name="Usuda Y."/>
            <person name="Kimura E."/>
            <person name="Sugimoto S."/>
            <person name="Matsui K."/>
            <person name="Yamagishi A."/>
            <person name="Kikuchi H."/>
            <person name="Ikeo K."/>
            <person name="Gojobori T."/>
        </authorList>
    </citation>
    <scope>NUCLEOTIDE SEQUENCE [LARGE SCALE GENOMIC DNA]</scope>
    <source>
        <strain>DSM 44549 / YS-314 / AJ 12310 / JCM 11189 / NBRC 100395</strain>
    </source>
</reference>
<gene>
    <name evidence="1" type="primary">truA</name>
    <name type="ordered locus">CE0574</name>
</gene>